<name>TGT_DINSH</name>
<reference key="1">
    <citation type="journal article" date="2010" name="ISME J.">
        <title>The complete genome sequence of the algal symbiont Dinoroseobacter shibae: a hitchhiker's guide to life in the sea.</title>
        <authorList>
            <person name="Wagner-Dobler I."/>
            <person name="Ballhausen B."/>
            <person name="Berger M."/>
            <person name="Brinkhoff T."/>
            <person name="Buchholz I."/>
            <person name="Bunk B."/>
            <person name="Cypionka H."/>
            <person name="Daniel R."/>
            <person name="Drepper T."/>
            <person name="Gerdts G."/>
            <person name="Hahnke S."/>
            <person name="Han C."/>
            <person name="Jahn D."/>
            <person name="Kalhoefer D."/>
            <person name="Kiss H."/>
            <person name="Klenk H.P."/>
            <person name="Kyrpides N."/>
            <person name="Liebl W."/>
            <person name="Liesegang H."/>
            <person name="Meincke L."/>
            <person name="Pati A."/>
            <person name="Petersen J."/>
            <person name="Piekarski T."/>
            <person name="Pommerenke C."/>
            <person name="Pradella S."/>
            <person name="Pukall R."/>
            <person name="Rabus R."/>
            <person name="Stackebrandt E."/>
            <person name="Thole S."/>
            <person name="Thompson L."/>
            <person name="Tielen P."/>
            <person name="Tomasch J."/>
            <person name="von Jan M."/>
            <person name="Wanphrut N."/>
            <person name="Wichels A."/>
            <person name="Zech H."/>
            <person name="Simon M."/>
        </authorList>
    </citation>
    <scope>NUCLEOTIDE SEQUENCE [LARGE SCALE GENOMIC DNA]</scope>
    <source>
        <strain>DSM 16493 / NCIMB 14021 / DFL 12</strain>
    </source>
</reference>
<sequence length="376" mass="41607">MTQRFSFTRLGQDGAARLGRINTPRGEIRTPAFMPVGTAATVKAMRPESVRETGADILLGNTYHLMLRPTAERIARLGGLHRFMNWDRPILTDSGGFQVMSLTGLRKLTEQGVTFKSHIDGSKHMLSPERSMEIQKLLRSDIVMCFDECPALPAPRERITESMELSMRWAARSREAFGDWPGHALFGIQQGGLEEDLRGKSAEALRAIEFDGYAVGGLAVGEGQEAMFGVLDYAPGMLPEDKPRYLMGVGKPGDLVGAVKRGIDMFDCVLPSRSGRTGQVFTRRGVVNIKNARHADDPRPLDEDCTCPACRSYSRAYLHHVFRAGEILSSMLLTWHNLHYYQELMQGMRDAIGAGDFAGFEARFLAQQAEGDIAPV</sequence>
<evidence type="ECO:0000255" key="1">
    <source>
        <dbReference type="HAMAP-Rule" id="MF_00168"/>
    </source>
</evidence>
<proteinExistence type="inferred from homology"/>
<comment type="function">
    <text evidence="1">Catalyzes the base-exchange of a guanine (G) residue with the queuine precursor 7-aminomethyl-7-deazaguanine (PreQ1) at position 34 (anticodon wobble position) in tRNAs with GU(N) anticodons (tRNA-Asp, -Asn, -His and -Tyr). Catalysis occurs through a double-displacement mechanism. The nucleophile active site attacks the C1' of nucleotide 34 to detach the guanine base from the RNA, forming a covalent enzyme-RNA intermediate. The proton acceptor active site deprotonates the incoming PreQ1, allowing a nucleophilic attack on the C1' of the ribose to form the product. After dissociation, two additional enzymatic reactions on the tRNA convert PreQ1 to queuine (Q), resulting in the hypermodified nucleoside queuosine (7-(((4,5-cis-dihydroxy-2-cyclopenten-1-yl)amino)methyl)-7-deazaguanosine).</text>
</comment>
<comment type="catalytic activity">
    <reaction evidence="1">
        <text>7-aminomethyl-7-carbaguanine + guanosine(34) in tRNA = 7-aminomethyl-7-carbaguanosine(34) in tRNA + guanine</text>
        <dbReference type="Rhea" id="RHEA:24104"/>
        <dbReference type="Rhea" id="RHEA-COMP:10341"/>
        <dbReference type="Rhea" id="RHEA-COMP:10342"/>
        <dbReference type="ChEBI" id="CHEBI:16235"/>
        <dbReference type="ChEBI" id="CHEBI:58703"/>
        <dbReference type="ChEBI" id="CHEBI:74269"/>
        <dbReference type="ChEBI" id="CHEBI:82833"/>
        <dbReference type="EC" id="2.4.2.29"/>
    </reaction>
</comment>
<comment type="cofactor">
    <cofactor evidence="1">
        <name>Zn(2+)</name>
        <dbReference type="ChEBI" id="CHEBI:29105"/>
    </cofactor>
    <text evidence="1">Binds 1 zinc ion per subunit.</text>
</comment>
<comment type="pathway">
    <text evidence="1">tRNA modification; tRNA-queuosine biosynthesis.</text>
</comment>
<comment type="subunit">
    <text evidence="1">Homodimer. Within each dimer, one monomer is responsible for RNA recognition and catalysis, while the other monomer binds to the replacement base PreQ1.</text>
</comment>
<comment type="similarity">
    <text evidence="1">Belongs to the queuine tRNA-ribosyltransferase family.</text>
</comment>
<gene>
    <name evidence="1" type="primary">tgt</name>
    <name type="ordered locus">Dshi_2346</name>
</gene>
<feature type="chain" id="PRO_1000077007" description="Queuine tRNA-ribosyltransferase">
    <location>
        <begin position="1"/>
        <end position="376"/>
    </location>
</feature>
<feature type="region of interest" description="RNA binding" evidence="1">
    <location>
        <begin position="248"/>
        <end position="254"/>
    </location>
</feature>
<feature type="active site" description="Proton acceptor" evidence="1">
    <location>
        <position position="93"/>
    </location>
</feature>
<feature type="active site" description="Nucleophile" evidence="1">
    <location>
        <position position="267"/>
    </location>
</feature>
<feature type="binding site" evidence="1">
    <location>
        <begin position="93"/>
        <end position="97"/>
    </location>
    <ligand>
        <name>substrate</name>
    </ligand>
</feature>
<feature type="binding site" evidence="1">
    <location>
        <position position="147"/>
    </location>
    <ligand>
        <name>substrate</name>
    </ligand>
</feature>
<feature type="binding site" evidence="1">
    <location>
        <position position="190"/>
    </location>
    <ligand>
        <name>substrate</name>
    </ligand>
</feature>
<feature type="binding site" evidence="1">
    <location>
        <position position="217"/>
    </location>
    <ligand>
        <name>substrate</name>
    </ligand>
</feature>
<feature type="binding site" evidence="1">
    <location>
        <position position="305"/>
    </location>
    <ligand>
        <name>Zn(2+)</name>
        <dbReference type="ChEBI" id="CHEBI:29105"/>
    </ligand>
</feature>
<feature type="binding site" evidence="1">
    <location>
        <position position="307"/>
    </location>
    <ligand>
        <name>Zn(2+)</name>
        <dbReference type="ChEBI" id="CHEBI:29105"/>
    </ligand>
</feature>
<feature type="binding site" evidence="1">
    <location>
        <position position="310"/>
    </location>
    <ligand>
        <name>Zn(2+)</name>
        <dbReference type="ChEBI" id="CHEBI:29105"/>
    </ligand>
</feature>
<feature type="binding site" evidence="1">
    <location>
        <position position="336"/>
    </location>
    <ligand>
        <name>Zn(2+)</name>
        <dbReference type="ChEBI" id="CHEBI:29105"/>
    </ligand>
</feature>
<protein>
    <recommendedName>
        <fullName evidence="1">Queuine tRNA-ribosyltransferase</fullName>
        <ecNumber evidence="1">2.4.2.29</ecNumber>
    </recommendedName>
    <alternativeName>
        <fullName evidence="1">Guanine insertion enzyme</fullName>
    </alternativeName>
    <alternativeName>
        <fullName evidence="1">tRNA-guanine transglycosylase</fullName>
    </alternativeName>
</protein>
<keyword id="KW-0328">Glycosyltransferase</keyword>
<keyword id="KW-0479">Metal-binding</keyword>
<keyword id="KW-0671">Queuosine biosynthesis</keyword>
<keyword id="KW-1185">Reference proteome</keyword>
<keyword id="KW-0808">Transferase</keyword>
<keyword id="KW-0819">tRNA processing</keyword>
<keyword id="KW-0862">Zinc</keyword>
<accession>A8LRQ1</accession>
<organism>
    <name type="scientific">Dinoroseobacter shibae (strain DSM 16493 / NCIMB 14021 / DFL 12)</name>
    <dbReference type="NCBI Taxonomy" id="398580"/>
    <lineage>
        <taxon>Bacteria</taxon>
        <taxon>Pseudomonadati</taxon>
        <taxon>Pseudomonadota</taxon>
        <taxon>Alphaproteobacteria</taxon>
        <taxon>Rhodobacterales</taxon>
        <taxon>Roseobacteraceae</taxon>
        <taxon>Dinoroseobacter</taxon>
    </lineage>
</organism>
<dbReference type="EC" id="2.4.2.29" evidence="1"/>
<dbReference type="EMBL" id="CP000830">
    <property type="protein sequence ID" value="ABV94082.1"/>
    <property type="molecule type" value="Genomic_DNA"/>
</dbReference>
<dbReference type="RefSeq" id="WP_012179013.1">
    <property type="nucleotide sequence ID" value="NC_009952.1"/>
</dbReference>
<dbReference type="SMR" id="A8LRQ1"/>
<dbReference type="STRING" id="398580.Dshi_2346"/>
<dbReference type="KEGG" id="dsh:Dshi_2346"/>
<dbReference type="eggNOG" id="COG0343">
    <property type="taxonomic scope" value="Bacteria"/>
</dbReference>
<dbReference type="HOGENOM" id="CLU_022060_0_1_5"/>
<dbReference type="OrthoDB" id="9805417at2"/>
<dbReference type="UniPathway" id="UPA00392"/>
<dbReference type="Proteomes" id="UP000006833">
    <property type="component" value="Chromosome"/>
</dbReference>
<dbReference type="GO" id="GO:0005829">
    <property type="term" value="C:cytosol"/>
    <property type="evidence" value="ECO:0007669"/>
    <property type="project" value="TreeGrafter"/>
</dbReference>
<dbReference type="GO" id="GO:0046872">
    <property type="term" value="F:metal ion binding"/>
    <property type="evidence" value="ECO:0007669"/>
    <property type="project" value="UniProtKB-KW"/>
</dbReference>
<dbReference type="GO" id="GO:0008479">
    <property type="term" value="F:tRNA-guanosine(34) queuine transglycosylase activity"/>
    <property type="evidence" value="ECO:0007669"/>
    <property type="project" value="UniProtKB-UniRule"/>
</dbReference>
<dbReference type="GO" id="GO:0008616">
    <property type="term" value="P:queuosine biosynthetic process"/>
    <property type="evidence" value="ECO:0007669"/>
    <property type="project" value="UniProtKB-UniRule"/>
</dbReference>
<dbReference type="GO" id="GO:0002099">
    <property type="term" value="P:tRNA wobble guanine modification"/>
    <property type="evidence" value="ECO:0007669"/>
    <property type="project" value="TreeGrafter"/>
</dbReference>
<dbReference type="GO" id="GO:0101030">
    <property type="term" value="P:tRNA-guanine transglycosylation"/>
    <property type="evidence" value="ECO:0007669"/>
    <property type="project" value="InterPro"/>
</dbReference>
<dbReference type="FunFam" id="3.20.20.105:FF:000001">
    <property type="entry name" value="Queuine tRNA-ribosyltransferase"/>
    <property type="match status" value="1"/>
</dbReference>
<dbReference type="Gene3D" id="3.20.20.105">
    <property type="entry name" value="Queuine tRNA-ribosyltransferase-like"/>
    <property type="match status" value="1"/>
</dbReference>
<dbReference type="HAMAP" id="MF_00168">
    <property type="entry name" value="Q_tRNA_Tgt"/>
    <property type="match status" value="1"/>
</dbReference>
<dbReference type="InterPro" id="IPR050076">
    <property type="entry name" value="ArchSynthase1/Queuine_TRR"/>
</dbReference>
<dbReference type="InterPro" id="IPR004803">
    <property type="entry name" value="TGT"/>
</dbReference>
<dbReference type="InterPro" id="IPR036511">
    <property type="entry name" value="TGT-like_sf"/>
</dbReference>
<dbReference type="InterPro" id="IPR002616">
    <property type="entry name" value="tRNA_ribo_trans-like"/>
</dbReference>
<dbReference type="NCBIfam" id="TIGR00430">
    <property type="entry name" value="Q_tRNA_tgt"/>
    <property type="match status" value="1"/>
</dbReference>
<dbReference type="NCBIfam" id="TIGR00449">
    <property type="entry name" value="tgt_general"/>
    <property type="match status" value="1"/>
</dbReference>
<dbReference type="PANTHER" id="PTHR46499">
    <property type="entry name" value="QUEUINE TRNA-RIBOSYLTRANSFERASE"/>
    <property type="match status" value="1"/>
</dbReference>
<dbReference type="PANTHER" id="PTHR46499:SF1">
    <property type="entry name" value="QUEUINE TRNA-RIBOSYLTRANSFERASE"/>
    <property type="match status" value="1"/>
</dbReference>
<dbReference type="Pfam" id="PF01702">
    <property type="entry name" value="TGT"/>
    <property type="match status" value="1"/>
</dbReference>
<dbReference type="SUPFAM" id="SSF51713">
    <property type="entry name" value="tRNA-guanine transglycosylase"/>
    <property type="match status" value="1"/>
</dbReference>